<dbReference type="EMBL" id="AP002032">
    <property type="protein sequence ID" value="BAB09812.1"/>
    <property type="molecule type" value="Genomic_DNA"/>
</dbReference>
<dbReference type="EMBL" id="CP002688">
    <property type="protein sequence ID" value="AED91064.1"/>
    <property type="molecule type" value="Genomic_DNA"/>
</dbReference>
<dbReference type="EMBL" id="CP002688">
    <property type="protein sequence ID" value="AED91065.1"/>
    <property type="molecule type" value="Genomic_DNA"/>
</dbReference>
<dbReference type="EMBL" id="AF428436">
    <property type="protein sequence ID" value="AAL16205.1"/>
    <property type="molecule type" value="mRNA"/>
</dbReference>
<dbReference type="EMBL" id="AY125551">
    <property type="protein sequence ID" value="AAM78061.1"/>
    <property type="molecule type" value="mRNA"/>
</dbReference>
<dbReference type="EMBL" id="AY085555">
    <property type="protein sequence ID" value="AAM62778.1"/>
    <property type="molecule type" value="mRNA"/>
</dbReference>
<dbReference type="RefSeq" id="NP_001190242.1">
    <molecule id="Q9FG29-1"/>
    <property type="nucleotide sequence ID" value="NM_001203313.1"/>
</dbReference>
<dbReference type="RefSeq" id="NP_196296.1">
    <molecule id="Q9FG29-2"/>
    <property type="nucleotide sequence ID" value="NM_120761.5"/>
</dbReference>
<dbReference type="SMR" id="Q9FG29"/>
<dbReference type="FunCoup" id="Q9FG29">
    <property type="interactions" value="116"/>
</dbReference>
<dbReference type="IntAct" id="Q9FG29">
    <property type="interactions" value="12"/>
</dbReference>
<dbReference type="STRING" id="3702.Q9FG29"/>
<dbReference type="iPTMnet" id="Q9FG29"/>
<dbReference type="PaxDb" id="3702-AT5G06780.1"/>
<dbReference type="ProteomicsDB" id="222659">
    <molecule id="Q9FG29-1"/>
</dbReference>
<dbReference type="EnsemblPlants" id="AT5G06780.1">
    <molecule id="Q9FG29-2"/>
    <property type="protein sequence ID" value="AT5G06780.1"/>
    <property type="gene ID" value="AT5G06780"/>
</dbReference>
<dbReference type="EnsemblPlants" id="AT5G06780.2">
    <molecule id="Q9FG29-1"/>
    <property type="protein sequence ID" value="AT5G06780.2"/>
    <property type="gene ID" value="AT5G06780"/>
</dbReference>
<dbReference type="GeneID" id="830567"/>
<dbReference type="Gramene" id="AT5G06780.1">
    <molecule id="Q9FG29-2"/>
    <property type="protein sequence ID" value="AT5G06780.1"/>
    <property type="gene ID" value="AT5G06780"/>
</dbReference>
<dbReference type="Gramene" id="AT5G06780.2">
    <molecule id="Q9FG29-1"/>
    <property type="protein sequence ID" value="AT5G06780.2"/>
    <property type="gene ID" value="AT5G06780"/>
</dbReference>
<dbReference type="KEGG" id="ath:AT5G06780"/>
<dbReference type="Araport" id="AT5G06780"/>
<dbReference type="TAIR" id="AT5G06780">
    <property type="gene designation" value="EML2"/>
</dbReference>
<dbReference type="eggNOG" id="KOG4675">
    <property type="taxonomic scope" value="Eukaryota"/>
</dbReference>
<dbReference type="HOGENOM" id="CLU_038636_0_0_1"/>
<dbReference type="InParanoid" id="Q9FG29"/>
<dbReference type="OMA" id="HINMEAQ"/>
<dbReference type="OrthoDB" id="1737049at2759"/>
<dbReference type="PRO" id="PR:Q9FG29"/>
<dbReference type="Proteomes" id="UP000006548">
    <property type="component" value="Chromosome 5"/>
</dbReference>
<dbReference type="ExpressionAtlas" id="Q9FG29">
    <property type="expression patterns" value="baseline and differential"/>
</dbReference>
<dbReference type="GO" id="GO:0005634">
    <property type="term" value="C:nucleus"/>
    <property type="evidence" value="ECO:0007669"/>
    <property type="project" value="UniProtKB-SubCell"/>
</dbReference>
<dbReference type="GO" id="GO:0050832">
    <property type="term" value="P:defense response to fungus"/>
    <property type="evidence" value="ECO:0000315"/>
    <property type="project" value="UniProtKB"/>
</dbReference>
<dbReference type="GO" id="GO:0009408">
    <property type="term" value="P:response to heat"/>
    <property type="evidence" value="ECO:0000270"/>
    <property type="project" value="UniProtKB"/>
</dbReference>
<dbReference type="GO" id="GO:0010228">
    <property type="term" value="P:vegetative to reproductive phase transition of meristem"/>
    <property type="evidence" value="ECO:0000315"/>
    <property type="project" value="UniProtKB"/>
</dbReference>
<dbReference type="CDD" id="cd20404">
    <property type="entry name" value="Tudor_Agenet_AtEML-like"/>
    <property type="match status" value="1"/>
</dbReference>
<dbReference type="Gene3D" id="2.30.30.140">
    <property type="match status" value="1"/>
</dbReference>
<dbReference type="Gene3D" id="1.10.1240.40">
    <property type="entry name" value="ENT domain"/>
    <property type="match status" value="1"/>
</dbReference>
<dbReference type="InterPro" id="IPR014002">
    <property type="entry name" value="Agenet_dom_plant"/>
</dbReference>
<dbReference type="InterPro" id="IPR033485">
    <property type="entry name" value="EMSY-LIKE_plant"/>
</dbReference>
<dbReference type="InterPro" id="IPR005491">
    <property type="entry name" value="ENT_dom"/>
</dbReference>
<dbReference type="InterPro" id="IPR036142">
    <property type="entry name" value="ENT_dom-like_sf"/>
</dbReference>
<dbReference type="PANTHER" id="PTHR33432:SF34">
    <property type="entry name" value="PROTEIN EMSY-LIKE 2"/>
    <property type="match status" value="1"/>
</dbReference>
<dbReference type="PANTHER" id="PTHR33432">
    <property type="entry name" value="PROTEIN EMSY-LIKE 4"/>
    <property type="match status" value="1"/>
</dbReference>
<dbReference type="Pfam" id="PF03735">
    <property type="entry name" value="ENT"/>
    <property type="match status" value="1"/>
</dbReference>
<dbReference type="SMART" id="SM00743">
    <property type="entry name" value="Agenet"/>
    <property type="match status" value="1"/>
</dbReference>
<dbReference type="SMART" id="SM01191">
    <property type="entry name" value="ENT"/>
    <property type="match status" value="1"/>
</dbReference>
<dbReference type="SUPFAM" id="SSF158639">
    <property type="entry name" value="ENT-like"/>
    <property type="match status" value="1"/>
</dbReference>
<dbReference type="SUPFAM" id="SSF63748">
    <property type="entry name" value="Tudor/PWWP/MBT"/>
    <property type="match status" value="1"/>
</dbReference>
<dbReference type="PROSITE" id="PS51138">
    <property type="entry name" value="ENT"/>
    <property type="match status" value="1"/>
</dbReference>
<feature type="chain" id="PRO_0000431792" description="Protein EMSY-LIKE 2">
    <location>
        <begin position="1"/>
        <end position="313"/>
    </location>
</feature>
<feature type="domain" description="ENT" evidence="4">
    <location>
        <begin position="1"/>
        <end position="88"/>
    </location>
</feature>
<feature type="region of interest" description="Disordered" evidence="5">
    <location>
        <begin position="84"/>
        <end position="106"/>
    </location>
</feature>
<feature type="region of interest" description="Disordered" evidence="5">
    <location>
        <begin position="195"/>
        <end position="229"/>
    </location>
</feature>
<feature type="region of interest" description="Disordered" evidence="5">
    <location>
        <begin position="294"/>
        <end position="313"/>
    </location>
</feature>
<feature type="coiled-coil region" evidence="3">
    <location>
        <begin position="35"/>
        <end position="58"/>
    </location>
</feature>
<feature type="coiled-coil region" evidence="3">
    <location>
        <begin position="267"/>
        <end position="293"/>
    </location>
</feature>
<feature type="compositionally biased region" description="Basic residues" evidence="5">
    <location>
        <begin position="206"/>
        <end position="219"/>
    </location>
</feature>
<feature type="modified residue" description="Phosphoserine" evidence="1">
    <location>
        <position position="294"/>
    </location>
</feature>
<feature type="splice variant" id="VSP_057384" description="In isoform 2.">
    <original>M</original>
    <variation>MVGLHINM</variation>
    <location>
        <position position="1"/>
    </location>
</feature>
<accession>Q9FG29</accession>
<accession>Q8LE93</accession>
<comment type="function">
    <text evidence="6 8">Probably involved in the regulation of chromatin states (Probable). Contributes to RPP7-mediated and basal immunity, especially against Hyaloperonospora arabidopsidis isolate Hiks1. Regulates negatively EDM2-dependent floral transition (PubMed:21830950).</text>
</comment>
<comment type="subunit">
    <text evidence="6">Interacts with EDM2 in nucleus.</text>
</comment>
<comment type="subcellular location">
    <subcellularLocation>
        <location evidence="2">Nucleus</location>
    </subcellularLocation>
</comment>
<comment type="alternative products">
    <event type="alternative initiation"/>
    <isoform>
        <id>Q9FG29-1</id>
        <name>1</name>
        <sequence type="displayed"/>
    </isoform>
    <isoform>
        <id>Q9FG29-2</id>
        <name>2</name>
        <sequence type="described" ref="VSP_057384"/>
    </isoform>
</comment>
<comment type="induction">
    <text evidence="6">Slightly induced by heat stress.</text>
</comment>
<comment type="disruption phenotype">
    <text evidence="6">Reduced resistance to Hyaloperonospora arabidopsidis isolate Hiks1. Slight early flowering phenotype.</text>
</comment>
<proteinExistence type="evidence at protein level"/>
<gene>
    <name evidence="7" type="primary">EML2</name>
    <name evidence="9" type="ordered locus">At5g06780</name>
    <name evidence="10" type="ORF">MPH15.14</name>
</gene>
<organism evidence="10">
    <name type="scientific">Arabidopsis thaliana</name>
    <name type="common">Mouse-ear cress</name>
    <dbReference type="NCBI Taxonomy" id="3702"/>
    <lineage>
        <taxon>Eukaryota</taxon>
        <taxon>Viridiplantae</taxon>
        <taxon>Streptophyta</taxon>
        <taxon>Embryophyta</taxon>
        <taxon>Tracheophyta</taxon>
        <taxon>Spermatophyta</taxon>
        <taxon>Magnoliopsida</taxon>
        <taxon>eudicotyledons</taxon>
        <taxon>Gunneridae</taxon>
        <taxon>Pentapetalae</taxon>
        <taxon>rosids</taxon>
        <taxon>malvids</taxon>
        <taxon>Brassicales</taxon>
        <taxon>Brassicaceae</taxon>
        <taxon>Camelineae</taxon>
        <taxon>Arabidopsis</taxon>
    </lineage>
</organism>
<protein>
    <recommendedName>
        <fullName evidence="7">Protein EMSY-LIKE 2</fullName>
        <shortName evidence="7">AtEML2</shortName>
    </recommendedName>
</protein>
<evidence type="ECO:0000250" key="1">
    <source>
        <dbReference type="UniProtKB" id="F4K2F0"/>
    </source>
</evidence>
<evidence type="ECO:0000250" key="2">
    <source>
        <dbReference type="UniProtKB" id="Q9C7C4"/>
    </source>
</evidence>
<evidence type="ECO:0000255" key="3"/>
<evidence type="ECO:0000255" key="4">
    <source>
        <dbReference type="PROSITE-ProRule" id="PRU00476"/>
    </source>
</evidence>
<evidence type="ECO:0000256" key="5">
    <source>
        <dbReference type="SAM" id="MobiDB-lite"/>
    </source>
</evidence>
<evidence type="ECO:0000269" key="6">
    <source>
    </source>
</evidence>
<evidence type="ECO:0000303" key="7">
    <source>
    </source>
</evidence>
<evidence type="ECO:0000305" key="8">
    <source>
    </source>
</evidence>
<evidence type="ECO:0000312" key="9">
    <source>
        <dbReference type="Araport" id="AT5G06780"/>
    </source>
</evidence>
<evidence type="ECO:0000312" key="10">
    <source>
        <dbReference type="EMBL" id="BAB09812.1"/>
    </source>
</evidence>
<name>EML2_ARATH</name>
<reference key="1">
    <citation type="submission" date="2000-05" db="EMBL/GenBank/DDBJ databases">
        <title>Structural analysis of Arabidopsis thaliana chromosome 5. XI.</title>
        <authorList>
            <person name="Kaneko T."/>
            <person name="Katoh T."/>
            <person name="Asamizu E."/>
            <person name="Sato S."/>
            <person name="Nakamura Y."/>
            <person name="Kotani H."/>
            <person name="Tabata S."/>
        </authorList>
    </citation>
    <scope>NUCLEOTIDE SEQUENCE [LARGE SCALE GENOMIC DNA]</scope>
    <source>
        <strain>cv. Columbia</strain>
    </source>
</reference>
<reference key="2">
    <citation type="journal article" date="2017" name="Plant J.">
        <title>Araport11: a complete reannotation of the Arabidopsis thaliana reference genome.</title>
        <authorList>
            <person name="Cheng C.Y."/>
            <person name="Krishnakumar V."/>
            <person name="Chan A.P."/>
            <person name="Thibaud-Nissen F."/>
            <person name="Schobel S."/>
            <person name="Town C.D."/>
        </authorList>
    </citation>
    <scope>GENOME REANNOTATION</scope>
    <source>
        <strain>cv. Columbia</strain>
    </source>
</reference>
<reference key="3">
    <citation type="journal article" date="2003" name="Science">
        <title>Empirical analysis of transcriptional activity in the Arabidopsis genome.</title>
        <authorList>
            <person name="Yamada K."/>
            <person name="Lim J."/>
            <person name="Dale J.M."/>
            <person name="Chen H."/>
            <person name="Shinn P."/>
            <person name="Palm C.J."/>
            <person name="Southwick A.M."/>
            <person name="Wu H.C."/>
            <person name="Kim C.J."/>
            <person name="Nguyen M."/>
            <person name="Pham P.K."/>
            <person name="Cheuk R.F."/>
            <person name="Karlin-Newmann G."/>
            <person name="Liu S.X."/>
            <person name="Lam B."/>
            <person name="Sakano H."/>
            <person name="Wu T."/>
            <person name="Yu G."/>
            <person name="Miranda M."/>
            <person name="Quach H.L."/>
            <person name="Tripp M."/>
            <person name="Chang C.H."/>
            <person name="Lee J.M."/>
            <person name="Toriumi M.J."/>
            <person name="Chan M.M."/>
            <person name="Tang C.C."/>
            <person name="Onodera C.S."/>
            <person name="Deng J.M."/>
            <person name="Akiyama K."/>
            <person name="Ansari Y."/>
            <person name="Arakawa T."/>
            <person name="Banh J."/>
            <person name="Banno F."/>
            <person name="Bowser L."/>
            <person name="Brooks S.Y."/>
            <person name="Carninci P."/>
            <person name="Chao Q."/>
            <person name="Choy N."/>
            <person name="Enju A."/>
            <person name="Goldsmith A.D."/>
            <person name="Gurjal M."/>
            <person name="Hansen N.F."/>
            <person name="Hayashizaki Y."/>
            <person name="Johnson-Hopson C."/>
            <person name="Hsuan V.W."/>
            <person name="Iida K."/>
            <person name="Karnes M."/>
            <person name="Khan S."/>
            <person name="Koesema E."/>
            <person name="Ishida J."/>
            <person name="Jiang P.X."/>
            <person name="Jones T."/>
            <person name="Kawai J."/>
            <person name="Kamiya A."/>
            <person name="Meyers C."/>
            <person name="Nakajima M."/>
            <person name="Narusaka M."/>
            <person name="Seki M."/>
            <person name="Sakurai T."/>
            <person name="Satou M."/>
            <person name="Tamse R."/>
            <person name="Vaysberg M."/>
            <person name="Wallender E.K."/>
            <person name="Wong C."/>
            <person name="Yamamura Y."/>
            <person name="Yuan S."/>
            <person name="Shinozaki K."/>
            <person name="Davis R.W."/>
            <person name="Theologis A."/>
            <person name="Ecker J.R."/>
        </authorList>
    </citation>
    <scope>NUCLEOTIDE SEQUENCE [LARGE SCALE MRNA] (ISOFORM 2)</scope>
    <source>
        <strain>cv. Columbia</strain>
    </source>
</reference>
<reference key="4">
    <citation type="submission" date="2002-03" db="EMBL/GenBank/DDBJ databases">
        <title>Full-length cDNA from Arabidopsis thaliana.</title>
        <authorList>
            <person name="Brover V.V."/>
            <person name="Troukhan M.E."/>
            <person name="Alexandrov N.A."/>
            <person name="Lu Y.-P."/>
            <person name="Flavell R.B."/>
            <person name="Feldmann K.A."/>
        </authorList>
    </citation>
    <scope>NUCLEOTIDE SEQUENCE [LARGE SCALE MRNA] (ISOFORM 1)</scope>
</reference>
<reference key="5">
    <citation type="journal article" date="2011" name="Mol. Plant Microbe Interact.">
        <title>EMSY-like genes are required for full RPP7-mediated race-specific immunity and basal defense in Arabidopsis.</title>
        <authorList>
            <person name="Tsuchiya T."/>
            <person name="Eulgem T."/>
        </authorList>
    </citation>
    <scope>FUNCTION</scope>
    <scope>INDUCTION BY HEAT</scope>
    <scope>INTERACTION WITH EDM2</scope>
    <scope>DISRUPTION PHENOTYPE</scope>
    <scope>GENE FAMILY</scope>
    <scope>NOMENCLATURE</scope>
</reference>
<sequence>MEAQIHILEQEAYSAVLRAFQAQADEFSWDKATVMTNLRKELRISDDENRQLLNNVHNDDLIKRIRDSRPRGGNQVVRHQSLDVHPSPTFSASRKKQKTFQSYPSIGSTRSKSFNNRVVSANEPAEALIGRKVWTKWPEDNSFYEAVVTQYNANEGRHALVYDINTVNETWEWVDLNEIPTKDIRWDGEEDGVTLNVGHGGGTTRGNRRTLSHGGRGRGPRTQPRREHLATENGGGRKFFGEIELFNTDSLVKEVERVFDSNLPDPHELDKAKKLLKEHEQALIAAIARLTDASDYESDGEEPYSHELPMLLG</sequence>
<keyword id="KW-0024">Alternative initiation</keyword>
<keyword id="KW-0175">Coiled coil</keyword>
<keyword id="KW-0539">Nucleus</keyword>
<keyword id="KW-0597">Phosphoprotein</keyword>
<keyword id="KW-0611">Plant defense</keyword>
<keyword id="KW-1185">Reference proteome</keyword>